<protein>
    <recommendedName>
        <fullName evidence="1">Glucans biosynthesis protein C</fullName>
        <ecNumber evidence="1">2.1.-.-</ecNumber>
    </recommendedName>
</protein>
<evidence type="ECO:0000255" key="1">
    <source>
        <dbReference type="HAMAP-Rule" id="MF_01066"/>
    </source>
</evidence>
<name>OPGC_SHISS</name>
<reference key="1">
    <citation type="journal article" date="2005" name="Nucleic Acids Res.">
        <title>Genome dynamics and diversity of Shigella species, the etiologic agents of bacillary dysentery.</title>
        <authorList>
            <person name="Yang F."/>
            <person name="Yang J."/>
            <person name="Zhang X."/>
            <person name="Chen L."/>
            <person name="Jiang Y."/>
            <person name="Yan Y."/>
            <person name="Tang X."/>
            <person name="Wang J."/>
            <person name="Xiong Z."/>
            <person name="Dong J."/>
            <person name="Xue Y."/>
            <person name="Zhu Y."/>
            <person name="Xu X."/>
            <person name="Sun L."/>
            <person name="Chen S."/>
            <person name="Nie H."/>
            <person name="Peng J."/>
            <person name="Xu J."/>
            <person name="Wang Y."/>
            <person name="Yuan Z."/>
            <person name="Wen Y."/>
            <person name="Yao Z."/>
            <person name="Shen Y."/>
            <person name="Qiang B."/>
            <person name="Hou Y."/>
            <person name="Yu J."/>
            <person name="Jin Q."/>
        </authorList>
    </citation>
    <scope>NUCLEOTIDE SEQUENCE [LARGE SCALE GENOMIC DNA]</scope>
    <source>
        <strain>Ss046</strain>
    </source>
</reference>
<feature type="chain" id="PRO_1000064518" description="Glucans biosynthesis protein C">
    <location>
        <begin position="1"/>
        <end position="385"/>
    </location>
</feature>
<feature type="transmembrane region" description="Helical" evidence="1">
    <location>
        <begin position="17"/>
        <end position="37"/>
    </location>
</feature>
<feature type="transmembrane region" description="Helical" evidence="1">
    <location>
        <begin position="60"/>
        <end position="80"/>
    </location>
</feature>
<feature type="transmembrane region" description="Helical" evidence="1">
    <location>
        <begin position="91"/>
        <end position="111"/>
    </location>
</feature>
<feature type="transmembrane region" description="Helical" evidence="1">
    <location>
        <begin position="137"/>
        <end position="157"/>
    </location>
</feature>
<feature type="transmembrane region" description="Helical" evidence="1">
    <location>
        <begin position="173"/>
        <end position="193"/>
    </location>
</feature>
<feature type="transmembrane region" description="Helical" evidence="1">
    <location>
        <begin position="212"/>
        <end position="232"/>
    </location>
</feature>
<feature type="transmembrane region" description="Helical" evidence="1">
    <location>
        <begin position="239"/>
        <end position="259"/>
    </location>
</feature>
<feature type="transmembrane region" description="Helical" evidence="1">
    <location>
        <begin position="274"/>
        <end position="294"/>
    </location>
</feature>
<feature type="transmembrane region" description="Helical" evidence="1">
    <location>
        <begin position="311"/>
        <end position="331"/>
    </location>
</feature>
<feature type="transmembrane region" description="Helical" evidence="1">
    <location>
        <begin position="338"/>
        <end position="358"/>
    </location>
</feature>
<comment type="function">
    <text evidence="1">Necessary for the succinyl substitution of periplasmic glucans. Could catalyze the transfer of succinyl residues from the cytoplasmic side of the membrane to the nascent glucan backbones on the periplasmic side of the membrane.</text>
</comment>
<comment type="pathway">
    <text evidence="1">Glycan metabolism; osmoregulated periplasmic glucan (OPG) biosynthesis.</text>
</comment>
<comment type="subcellular location">
    <subcellularLocation>
        <location evidence="1">Cell membrane</location>
        <topology evidence="1">Multi-pass membrane protein</topology>
    </subcellularLocation>
</comment>
<comment type="similarity">
    <text evidence="1">Belongs to the acyltransferase 3 family. OpgC subfamily.</text>
</comment>
<sequence length="385" mass="44700">MNPVPAQREYFLDSIRAWLMLLGIPFHISLIYSSHTWHVNSAEPSLWLTLFNDFIHSFRMQVFFVISGYFSYMLFLRYPLKKWWKVRVERVGIPMLTAIPLLTLPQFIMLQYVKGKAESWPGLSLYDKYNTLAWELISHLWFLLVLVVMTTLCVWIFKRIRNNLENSDKTNKKFSMVKLSVIFLCLGIGYAVIRRTIFIVYPPILSNGMFNFIVMQTLFYLPFFILGALAFIFPHLKALFTTPSRGCTLAAALAFVAYLLNQRYGSGDAWMYETESVITMVLGLWMVNVVFSFGHRLLNFQSARVTYFVNASLFIYLVHHPLTLFFGAYITPHITSNWLGFLCGLIFVVGIAIILYEIHLRIPLLKFLFSGKPVVKRENDKAPAR</sequence>
<keyword id="KW-0012">Acyltransferase</keyword>
<keyword id="KW-1003">Cell membrane</keyword>
<keyword id="KW-0472">Membrane</keyword>
<keyword id="KW-1185">Reference proteome</keyword>
<keyword id="KW-0808">Transferase</keyword>
<keyword id="KW-0812">Transmembrane</keyword>
<keyword id="KW-1133">Transmembrane helix</keyword>
<organism>
    <name type="scientific">Shigella sonnei (strain Ss046)</name>
    <dbReference type="NCBI Taxonomy" id="300269"/>
    <lineage>
        <taxon>Bacteria</taxon>
        <taxon>Pseudomonadati</taxon>
        <taxon>Pseudomonadota</taxon>
        <taxon>Gammaproteobacteria</taxon>
        <taxon>Enterobacterales</taxon>
        <taxon>Enterobacteriaceae</taxon>
        <taxon>Shigella</taxon>
    </lineage>
</organism>
<gene>
    <name evidence="1" type="primary">mdoC</name>
    <name evidence="1" type="synonym">opgC</name>
    <name type="ordered locus">SSON_1060</name>
</gene>
<proteinExistence type="inferred from homology"/>
<accession>Q3Z376</accession>
<dbReference type="EC" id="2.1.-.-" evidence="1"/>
<dbReference type="EMBL" id="CP000038">
    <property type="protein sequence ID" value="AAZ87786.1"/>
    <property type="molecule type" value="Genomic_DNA"/>
</dbReference>
<dbReference type="RefSeq" id="WP_001070350.1">
    <property type="nucleotide sequence ID" value="NC_007384.1"/>
</dbReference>
<dbReference type="GeneID" id="93776367"/>
<dbReference type="KEGG" id="ssn:SSON_1060"/>
<dbReference type="HOGENOM" id="CLU_036182_2_0_6"/>
<dbReference type="UniPathway" id="UPA00637"/>
<dbReference type="Proteomes" id="UP000002529">
    <property type="component" value="Chromosome"/>
</dbReference>
<dbReference type="GO" id="GO:0005886">
    <property type="term" value="C:plasma membrane"/>
    <property type="evidence" value="ECO:0007669"/>
    <property type="project" value="UniProtKB-SubCell"/>
</dbReference>
<dbReference type="GO" id="GO:0016747">
    <property type="term" value="F:acyltransferase activity, transferring groups other than amino-acyl groups"/>
    <property type="evidence" value="ECO:0007669"/>
    <property type="project" value="InterPro"/>
</dbReference>
<dbReference type="GO" id="GO:0016741">
    <property type="term" value="F:transferase activity, transferring one-carbon groups"/>
    <property type="evidence" value="ECO:0007669"/>
    <property type="project" value="UniProtKB-UniRule"/>
</dbReference>
<dbReference type="GO" id="GO:0009250">
    <property type="term" value="P:glucan biosynthetic process"/>
    <property type="evidence" value="ECO:0007669"/>
    <property type="project" value="UniProtKB-UniRule"/>
</dbReference>
<dbReference type="HAMAP" id="MF_01066">
    <property type="entry name" value="MdoC_OpgC"/>
    <property type="match status" value="1"/>
</dbReference>
<dbReference type="InterPro" id="IPR002656">
    <property type="entry name" value="Acyl_transf_3_dom"/>
</dbReference>
<dbReference type="InterPro" id="IPR050623">
    <property type="entry name" value="Glucan_succinyl_AcylTrfase"/>
</dbReference>
<dbReference type="InterPro" id="IPR023723">
    <property type="entry name" value="Glucans_biosynth_C"/>
</dbReference>
<dbReference type="NCBIfam" id="NF003014">
    <property type="entry name" value="PRK03854.1"/>
    <property type="match status" value="1"/>
</dbReference>
<dbReference type="PANTHER" id="PTHR36927">
    <property type="entry name" value="BLR4337 PROTEIN"/>
    <property type="match status" value="1"/>
</dbReference>
<dbReference type="PANTHER" id="PTHR36927:SF3">
    <property type="entry name" value="GLUCANS BIOSYNTHESIS PROTEIN C"/>
    <property type="match status" value="1"/>
</dbReference>
<dbReference type="Pfam" id="PF01757">
    <property type="entry name" value="Acyl_transf_3"/>
    <property type="match status" value="1"/>
</dbReference>